<accession>Q1ZXC4</accession>
<evidence type="ECO:0000250" key="1"/>
<evidence type="ECO:0000255" key="2"/>
<evidence type="ECO:0000305" key="3"/>
<comment type="cofactor">
    <cofactor evidence="1">
        <name>heme</name>
        <dbReference type="ChEBI" id="CHEBI:30413"/>
    </cofactor>
</comment>
<comment type="subcellular location">
    <subcellularLocation>
        <location evidence="3">Membrane</location>
        <topology evidence="3">Single-pass membrane protein</topology>
    </subcellularLocation>
</comment>
<comment type="similarity">
    <text evidence="3">Belongs to the cytochrome P450 family.</text>
</comment>
<feature type="chain" id="PRO_0000318821" description="Probable cytochrome P450 514A2">
    <location>
        <begin position="1"/>
        <end position="500"/>
    </location>
</feature>
<feature type="transmembrane region" description="Helical" evidence="2">
    <location>
        <begin position="4"/>
        <end position="24"/>
    </location>
</feature>
<feature type="binding site" description="axial binding residue" evidence="1">
    <location>
        <position position="446"/>
    </location>
    <ligand>
        <name>heme</name>
        <dbReference type="ChEBI" id="CHEBI:30413"/>
    </ligand>
    <ligandPart>
        <name>Fe</name>
        <dbReference type="ChEBI" id="CHEBI:18248"/>
    </ligandPart>
</feature>
<organism>
    <name type="scientific">Dictyostelium discoideum</name>
    <name type="common">Social amoeba</name>
    <dbReference type="NCBI Taxonomy" id="44689"/>
    <lineage>
        <taxon>Eukaryota</taxon>
        <taxon>Amoebozoa</taxon>
        <taxon>Evosea</taxon>
        <taxon>Eumycetozoa</taxon>
        <taxon>Dictyostelia</taxon>
        <taxon>Dictyosteliales</taxon>
        <taxon>Dictyosteliaceae</taxon>
        <taxon>Dictyostelium</taxon>
    </lineage>
</organism>
<gene>
    <name type="primary">cyp514A2</name>
    <name type="ORF">DDB_G0294561</name>
</gene>
<proteinExistence type="inferred from homology"/>
<reference key="1">
    <citation type="journal article" date="2005" name="Nature">
        <title>The genome of the social amoeba Dictyostelium discoideum.</title>
        <authorList>
            <person name="Eichinger L."/>
            <person name="Pachebat J.A."/>
            <person name="Gloeckner G."/>
            <person name="Rajandream M.A."/>
            <person name="Sucgang R."/>
            <person name="Berriman M."/>
            <person name="Song J."/>
            <person name="Olsen R."/>
            <person name="Szafranski K."/>
            <person name="Xu Q."/>
            <person name="Tunggal B."/>
            <person name="Kummerfeld S."/>
            <person name="Madera M."/>
            <person name="Konfortov B.A."/>
            <person name="Rivero F."/>
            <person name="Bankier A.T."/>
            <person name="Lehmann R."/>
            <person name="Hamlin N."/>
            <person name="Davies R."/>
            <person name="Gaudet P."/>
            <person name="Fey P."/>
            <person name="Pilcher K."/>
            <person name="Chen G."/>
            <person name="Saunders D."/>
            <person name="Sodergren E.J."/>
            <person name="Davis P."/>
            <person name="Kerhornou A."/>
            <person name="Nie X."/>
            <person name="Hall N."/>
            <person name="Anjard C."/>
            <person name="Hemphill L."/>
            <person name="Bason N."/>
            <person name="Farbrother P."/>
            <person name="Desany B."/>
            <person name="Just E."/>
            <person name="Morio T."/>
            <person name="Rost R."/>
            <person name="Churcher C.M."/>
            <person name="Cooper J."/>
            <person name="Haydock S."/>
            <person name="van Driessche N."/>
            <person name="Cronin A."/>
            <person name="Goodhead I."/>
            <person name="Muzny D.M."/>
            <person name="Mourier T."/>
            <person name="Pain A."/>
            <person name="Lu M."/>
            <person name="Harper D."/>
            <person name="Lindsay R."/>
            <person name="Hauser H."/>
            <person name="James K.D."/>
            <person name="Quiles M."/>
            <person name="Madan Babu M."/>
            <person name="Saito T."/>
            <person name="Buchrieser C."/>
            <person name="Wardroper A."/>
            <person name="Felder M."/>
            <person name="Thangavelu M."/>
            <person name="Johnson D."/>
            <person name="Knights A."/>
            <person name="Loulseged H."/>
            <person name="Mungall K.L."/>
            <person name="Oliver K."/>
            <person name="Price C."/>
            <person name="Quail M.A."/>
            <person name="Urushihara H."/>
            <person name="Hernandez J."/>
            <person name="Rabbinowitsch E."/>
            <person name="Steffen D."/>
            <person name="Sanders M."/>
            <person name="Ma J."/>
            <person name="Kohara Y."/>
            <person name="Sharp S."/>
            <person name="Simmonds M.N."/>
            <person name="Spiegler S."/>
            <person name="Tivey A."/>
            <person name="Sugano S."/>
            <person name="White B."/>
            <person name="Walker D."/>
            <person name="Woodward J.R."/>
            <person name="Winckler T."/>
            <person name="Tanaka Y."/>
            <person name="Shaulsky G."/>
            <person name="Schleicher M."/>
            <person name="Weinstock G.M."/>
            <person name="Rosenthal A."/>
            <person name="Cox E.C."/>
            <person name="Chisholm R.L."/>
            <person name="Gibbs R.A."/>
            <person name="Loomis W.F."/>
            <person name="Platzer M."/>
            <person name="Kay R.R."/>
            <person name="Williams J.G."/>
            <person name="Dear P.H."/>
            <person name="Noegel A.A."/>
            <person name="Barrell B.G."/>
            <person name="Kuspa A."/>
        </authorList>
    </citation>
    <scope>NUCLEOTIDE SEQUENCE [LARGE SCALE GENOMIC DNA]</scope>
    <source>
        <strain>AX4</strain>
    </source>
</reference>
<protein>
    <recommendedName>
        <fullName>Probable cytochrome P450 514A2</fullName>
        <ecNumber>1.14.-.-</ecNumber>
    </recommendedName>
</protein>
<sequence>MNLIYTIILTIIILVLIISIKDLFFEDKIKKINKSIPSPPTIPIFGNLLQINSKDVATCFNDFYKQYGKVYRLRLGSVETVVLTGGDIIDECFNKKYRDFLKARYVKFSRYLGKDTNILHSNGDYHFLLKGVLSSQVTVRKLNNGRLEFNKYILQMFNNLNNNDEGSTMFLANDVPSQIKKLILKVVLNFTLGIEENDDINLSLFQNGSNIFKAAGLFIYSDYLPFLFPLDIKSMAKSNMISSYVFVRDYLAKKLEEVKKKEYIINGDDDGGVDTSQTPLIESYYKLYLQGLIGYDSILLSIVDIIIASVDTTSNSISFIIARLTNHQEIQSKIYEEIMSNDINNNSNNISFSDHSKYPYIISIMNETYRYYASVPLPEPNMTTEDIEVDGYKIAKGTQIYKNIRGTLISKEFWGEDALEFKPERFKTQTLNQKGLLHFGAGPRGCPGARFTECFFFTLMVLLFKNYKLQNPNDNPIDDRGDVGLSMQCKPYDALFIKRN</sequence>
<keyword id="KW-0349">Heme</keyword>
<keyword id="KW-0408">Iron</keyword>
<keyword id="KW-0472">Membrane</keyword>
<keyword id="KW-0479">Metal-binding</keyword>
<keyword id="KW-0503">Monooxygenase</keyword>
<keyword id="KW-0560">Oxidoreductase</keyword>
<keyword id="KW-1185">Reference proteome</keyword>
<keyword id="KW-0812">Transmembrane</keyword>
<keyword id="KW-1133">Transmembrane helix</keyword>
<name>C5142_DICDI</name>
<dbReference type="EC" id="1.14.-.-"/>
<dbReference type="EMBL" id="AAFI02000162">
    <property type="protein sequence ID" value="EAS66829.1"/>
    <property type="molecule type" value="Genomic_DNA"/>
</dbReference>
<dbReference type="RefSeq" id="XP_001134512.1">
    <property type="nucleotide sequence ID" value="XM_001134512.1"/>
</dbReference>
<dbReference type="SMR" id="Q1ZXC4"/>
<dbReference type="STRING" id="44689.Q1ZXC4"/>
<dbReference type="PaxDb" id="44689-DDB0232984"/>
<dbReference type="EnsemblProtists" id="EAS66829">
    <property type="protein sequence ID" value="EAS66829"/>
    <property type="gene ID" value="DDB_G0294561"/>
</dbReference>
<dbReference type="GeneID" id="8627579"/>
<dbReference type="KEGG" id="ddi:DDB_G0294561"/>
<dbReference type="dictyBase" id="DDB_G0294561">
    <property type="gene designation" value="cyp514A2"/>
</dbReference>
<dbReference type="VEuPathDB" id="AmoebaDB:DDB_G0294561"/>
<dbReference type="eggNOG" id="KOG0156">
    <property type="taxonomic scope" value="Eukaryota"/>
</dbReference>
<dbReference type="HOGENOM" id="CLU_001570_22_0_1"/>
<dbReference type="InParanoid" id="Q1ZXC4"/>
<dbReference type="OMA" id="PMYTFYL"/>
<dbReference type="PhylomeDB" id="Q1ZXC4"/>
<dbReference type="PRO" id="PR:Q1ZXC4"/>
<dbReference type="Proteomes" id="UP000002195">
    <property type="component" value="Chromosome 5"/>
</dbReference>
<dbReference type="GO" id="GO:0016020">
    <property type="term" value="C:membrane"/>
    <property type="evidence" value="ECO:0007669"/>
    <property type="project" value="UniProtKB-SubCell"/>
</dbReference>
<dbReference type="GO" id="GO:0020037">
    <property type="term" value="F:heme binding"/>
    <property type="evidence" value="ECO:0007669"/>
    <property type="project" value="InterPro"/>
</dbReference>
<dbReference type="GO" id="GO:0005506">
    <property type="term" value="F:iron ion binding"/>
    <property type="evidence" value="ECO:0007669"/>
    <property type="project" value="InterPro"/>
</dbReference>
<dbReference type="GO" id="GO:0004497">
    <property type="term" value="F:monooxygenase activity"/>
    <property type="evidence" value="ECO:0007669"/>
    <property type="project" value="UniProtKB-KW"/>
</dbReference>
<dbReference type="GO" id="GO:0016705">
    <property type="term" value="F:oxidoreductase activity, acting on paired donors, with incorporation or reduction of molecular oxygen"/>
    <property type="evidence" value="ECO:0007669"/>
    <property type="project" value="InterPro"/>
</dbReference>
<dbReference type="Gene3D" id="1.10.630.10">
    <property type="entry name" value="Cytochrome P450"/>
    <property type="match status" value="1"/>
</dbReference>
<dbReference type="InterPro" id="IPR001128">
    <property type="entry name" value="Cyt_P450"/>
</dbReference>
<dbReference type="InterPro" id="IPR017972">
    <property type="entry name" value="Cyt_P450_CS"/>
</dbReference>
<dbReference type="InterPro" id="IPR002401">
    <property type="entry name" value="Cyt_P450_E_grp-I"/>
</dbReference>
<dbReference type="InterPro" id="IPR036396">
    <property type="entry name" value="Cyt_P450_sf"/>
</dbReference>
<dbReference type="PANTHER" id="PTHR24303:SF37">
    <property type="entry name" value="CYTOCHROME P450 514A1-RELATED"/>
    <property type="match status" value="1"/>
</dbReference>
<dbReference type="PANTHER" id="PTHR24303">
    <property type="entry name" value="HEME-BINDING MONOOXYGENASE FAMILY"/>
    <property type="match status" value="1"/>
</dbReference>
<dbReference type="Pfam" id="PF00067">
    <property type="entry name" value="p450"/>
    <property type="match status" value="1"/>
</dbReference>
<dbReference type="PRINTS" id="PR00463">
    <property type="entry name" value="EP450I"/>
</dbReference>
<dbReference type="PRINTS" id="PR00385">
    <property type="entry name" value="P450"/>
</dbReference>
<dbReference type="SUPFAM" id="SSF48264">
    <property type="entry name" value="Cytochrome P450"/>
    <property type="match status" value="1"/>
</dbReference>
<dbReference type="PROSITE" id="PS00086">
    <property type="entry name" value="CYTOCHROME_P450"/>
    <property type="match status" value="1"/>
</dbReference>